<feature type="chain" id="PRO_0000444310" description="D-aminoacyl-tRNA deacylase 2">
    <location>
        <begin position="1"/>
        <end position="167"/>
    </location>
</feature>
<feature type="short sequence motif" description="Gly-transPro motif, allows the protein to recognize chirality of D-amino acids" evidence="1">
    <location>
        <begin position="159"/>
        <end position="160"/>
    </location>
</feature>
<evidence type="ECO:0000250" key="1">
    <source>
        <dbReference type="UniProtKB" id="Q8BHA3"/>
    </source>
</evidence>
<evidence type="ECO:0000269" key="2">
    <source>
    </source>
</evidence>
<evidence type="ECO:0000303" key="3">
    <source>
    </source>
</evidence>
<evidence type="ECO:0000305" key="4"/>
<evidence type="ECO:0000305" key="5">
    <source>
    </source>
</evidence>
<evidence type="ECO:0000312" key="6">
    <source>
        <dbReference type="Proteomes" id="UP000000539"/>
    </source>
</evidence>
<protein>
    <recommendedName>
        <fullName evidence="4">D-aminoacyl-tRNA deacylase 2</fullName>
        <ecNumber evidence="2">3.1.1.96</ecNumber>
    </recommendedName>
    <alternativeName>
        <fullName evidence="3">Animalia-specific tRNA deacylase</fullName>
        <shortName evidence="3">ATD</shortName>
    </alternativeName>
    <alternativeName>
        <fullName>D-tyrosyl-tRNA(Tyr) deacylase 2</fullName>
    </alternativeName>
    <alternativeName>
        <fullName evidence="5">L-alanyl-tRNA deacylase</fullName>
    </alternativeName>
</protein>
<gene>
    <name type="primary">DTD2</name>
</gene>
<comment type="function">
    <text evidence="1 2">Deacylates mischarged D-aminoacyl-tRNAs (By similarity). Also deacylates mischarged glycyl-tRNA(Ala), protecting cells against glycine mischarging by AlaRS (By similarity). Probably acts by rejecting L-amino acids from its binding site rather than specific recognition of D-amino acids (By similarity). Catalyzes the hydrolysis of D-tyrosyl-tRNA(Tyr), has no activity on correctly charged L-tyrosyl-tRNA(Tyr) (By similarity). By recycling D-aminoacyl-tRNA to D-amino acids and free tRNA molecules, this enzyme counteracts the toxicity associated with the formation of D-aminoacyl-tRNA entities in vivo and helps enforce protein L-homochirality. In contrast to DTD1, deacylates L-Ala mischarged on tRNA(Thr)(G4.U69) by alanine-tRNA ligase AARS (PubMed:29410408). Can deacylate L-Ala due to a relaxed specificity for substrate chirality caused by the trans conformation of the Gly-Pro motif in the active site (PubMed:29410408). Also hydrolyzes correctly charged, achiral, glycyl-tRNA(Gly) in vitro, although in vivo EEF1A1/EF-Tu may protect cognate achiral glycyl-tRNA(Gly) from DTD2-mediated deacetylation (By similarity).</text>
</comment>
<comment type="catalytic activity">
    <reaction evidence="2">
        <text>a D-aminoacyl-tRNA + H2O = a tRNA + a D-alpha-amino acid + H(+)</text>
        <dbReference type="Rhea" id="RHEA:13953"/>
        <dbReference type="Rhea" id="RHEA-COMP:10123"/>
        <dbReference type="Rhea" id="RHEA-COMP:10124"/>
        <dbReference type="ChEBI" id="CHEBI:15377"/>
        <dbReference type="ChEBI" id="CHEBI:15378"/>
        <dbReference type="ChEBI" id="CHEBI:59871"/>
        <dbReference type="ChEBI" id="CHEBI:78442"/>
        <dbReference type="ChEBI" id="CHEBI:79333"/>
        <dbReference type="EC" id="3.1.1.96"/>
    </reaction>
</comment>
<comment type="catalytic activity">
    <reaction evidence="2">
        <text>glycyl-tRNA(Ala) + H2O = tRNA(Ala) + glycine + H(+)</text>
        <dbReference type="Rhea" id="RHEA:53744"/>
        <dbReference type="Rhea" id="RHEA-COMP:9657"/>
        <dbReference type="Rhea" id="RHEA-COMP:13640"/>
        <dbReference type="ChEBI" id="CHEBI:15377"/>
        <dbReference type="ChEBI" id="CHEBI:15378"/>
        <dbReference type="ChEBI" id="CHEBI:57305"/>
        <dbReference type="ChEBI" id="CHEBI:78442"/>
        <dbReference type="ChEBI" id="CHEBI:78522"/>
        <dbReference type="EC" id="3.1.1.96"/>
    </reaction>
</comment>
<comment type="catalytic activity">
    <reaction evidence="1">
        <text>D-tyrosyl-tRNA(Tyr) + H2O = D-tyrosine + tRNA(Tyr)</text>
        <dbReference type="Rhea" id="RHEA:25347"/>
        <dbReference type="Rhea" id="RHEA-COMP:9707"/>
        <dbReference type="Rhea" id="RHEA-COMP:9872"/>
        <dbReference type="ChEBI" id="CHEBI:15377"/>
        <dbReference type="ChEBI" id="CHEBI:58570"/>
        <dbReference type="ChEBI" id="CHEBI:78442"/>
        <dbReference type="ChEBI" id="CHEBI:78723"/>
    </reaction>
</comment>
<comment type="catalytic activity">
    <reaction evidence="2">
        <text>L-alanyl-tRNA(Thr) + H2O = tRNA(Thr) + L-alanine + H(+)</text>
        <dbReference type="Rhea" id="RHEA:17793"/>
        <dbReference type="Rhea" id="RHEA-COMP:9670"/>
        <dbReference type="Rhea" id="RHEA-COMP:14576"/>
        <dbReference type="ChEBI" id="CHEBI:15377"/>
        <dbReference type="ChEBI" id="CHEBI:15378"/>
        <dbReference type="ChEBI" id="CHEBI:57972"/>
        <dbReference type="ChEBI" id="CHEBI:78442"/>
        <dbReference type="ChEBI" id="CHEBI:78497"/>
    </reaction>
</comment>
<comment type="subunit">
    <text evidence="1">Homodimer.</text>
</comment>
<comment type="subcellular location">
    <subcellularLocation>
        <location evidence="4">Cytoplasm</location>
    </subcellularLocation>
</comment>
<comment type="domain">
    <text evidence="1">A Gly-transPro motif from one monomer fits into the active site of the other monomer to allow specific chiral rejection of most L-amino acids except L-Ala. The trans conformation of the motif is maintained by Arg-150.</text>
</comment>
<comment type="similarity">
    <text evidence="4">Belongs to the DTD family.</text>
</comment>
<organism evidence="6">
    <name type="scientific">Gallus gallus</name>
    <name type="common">Chicken</name>
    <dbReference type="NCBI Taxonomy" id="9031"/>
    <lineage>
        <taxon>Eukaryota</taxon>
        <taxon>Metazoa</taxon>
        <taxon>Chordata</taxon>
        <taxon>Craniata</taxon>
        <taxon>Vertebrata</taxon>
        <taxon>Euteleostomi</taxon>
        <taxon>Archelosauria</taxon>
        <taxon>Archosauria</taxon>
        <taxon>Dinosauria</taxon>
        <taxon>Saurischia</taxon>
        <taxon>Theropoda</taxon>
        <taxon>Coelurosauria</taxon>
        <taxon>Aves</taxon>
        <taxon>Neognathae</taxon>
        <taxon>Galloanserae</taxon>
        <taxon>Galliformes</taxon>
        <taxon>Phasianidae</taxon>
        <taxon>Phasianinae</taxon>
        <taxon>Gallus</taxon>
    </lineage>
</organism>
<accession>E1C762</accession>
<proteinExistence type="evidence at protein level"/>
<dbReference type="EC" id="3.1.1.96" evidence="2"/>
<dbReference type="EMBL" id="AADN04000014">
    <property type="status" value="NOT_ANNOTATED_CDS"/>
    <property type="molecule type" value="Genomic_DNA"/>
</dbReference>
<dbReference type="RefSeq" id="NP_001383550.1">
    <property type="nucleotide sequence ID" value="NM_001396621.1"/>
</dbReference>
<dbReference type="RefSeq" id="XP_001234140.2">
    <property type="nucleotide sequence ID" value="XM_001234139.4"/>
</dbReference>
<dbReference type="SMR" id="E1C762"/>
<dbReference type="FunCoup" id="E1C762">
    <property type="interactions" value="148"/>
</dbReference>
<dbReference type="STRING" id="9031.ENSGALP00000031950"/>
<dbReference type="PaxDb" id="9031-ENSGALP00000031950"/>
<dbReference type="Ensembl" id="ENSGALT00010013453.1">
    <property type="protein sequence ID" value="ENSGALP00010007982.1"/>
    <property type="gene ID" value="ENSGALG00010005617.1"/>
</dbReference>
<dbReference type="GeneID" id="770817"/>
<dbReference type="KEGG" id="gga:770817"/>
<dbReference type="VEuPathDB" id="HostDB:geneid_770817"/>
<dbReference type="eggNOG" id="KOG3323">
    <property type="taxonomic scope" value="Eukaryota"/>
</dbReference>
<dbReference type="GeneTree" id="ENSGT00940000153431"/>
<dbReference type="HOGENOM" id="CLU_076118_1_0_1"/>
<dbReference type="InParanoid" id="E1C762"/>
<dbReference type="OMA" id="QQCLHAK"/>
<dbReference type="OrthoDB" id="275783at2759"/>
<dbReference type="PhylomeDB" id="E1C762"/>
<dbReference type="TreeFam" id="TF329119"/>
<dbReference type="PRO" id="PR:E1C762"/>
<dbReference type="Proteomes" id="UP000000539">
    <property type="component" value="Chromosome 5"/>
</dbReference>
<dbReference type="Bgee" id="ENSGALG00000009978">
    <property type="expression patterns" value="Expressed in heart and 14 other cell types or tissues"/>
</dbReference>
<dbReference type="GO" id="GO:0005737">
    <property type="term" value="C:cytoplasm"/>
    <property type="evidence" value="ECO:0000318"/>
    <property type="project" value="GO_Central"/>
</dbReference>
<dbReference type="GO" id="GO:0106105">
    <property type="term" value="F:Ala-tRNA(Thr) deacylase activity"/>
    <property type="evidence" value="ECO:0000314"/>
    <property type="project" value="UniProtKB"/>
</dbReference>
<dbReference type="GO" id="GO:0051500">
    <property type="term" value="F:D-tyrosyl-tRNA(Tyr) deacylase activity"/>
    <property type="evidence" value="ECO:0000318"/>
    <property type="project" value="GO_Central"/>
</dbReference>
<dbReference type="GO" id="GO:0000049">
    <property type="term" value="F:tRNA binding"/>
    <property type="evidence" value="ECO:0007669"/>
    <property type="project" value="UniProtKB-KW"/>
</dbReference>
<dbReference type="GO" id="GO:0106074">
    <property type="term" value="P:aminoacyl-tRNA metabolism involved in translational fidelity"/>
    <property type="evidence" value="ECO:0000314"/>
    <property type="project" value="UniProtKB"/>
</dbReference>
<dbReference type="GO" id="GO:0006399">
    <property type="term" value="P:tRNA metabolic process"/>
    <property type="evidence" value="ECO:0000318"/>
    <property type="project" value="GO_Central"/>
</dbReference>
<dbReference type="FunFam" id="3.50.80.10:FF:000003">
    <property type="entry name" value="probable D-tyrosyl-tRNA(Tyr) deacylase 2"/>
    <property type="match status" value="1"/>
</dbReference>
<dbReference type="Gene3D" id="3.50.80.10">
    <property type="entry name" value="D-tyrosyl-tRNA(Tyr) deacylase"/>
    <property type="match status" value="1"/>
</dbReference>
<dbReference type="InterPro" id="IPR003732">
    <property type="entry name" value="Daa-tRNA_deacyls_DTD"/>
</dbReference>
<dbReference type="InterPro" id="IPR023509">
    <property type="entry name" value="DTD-like_sf"/>
</dbReference>
<dbReference type="PANTHER" id="PTHR10472:SF1">
    <property type="entry name" value="D-AMINOACYL-TRNA DEACYLASE 2"/>
    <property type="match status" value="1"/>
</dbReference>
<dbReference type="PANTHER" id="PTHR10472">
    <property type="entry name" value="D-TYROSYL-TRNA TYR DEACYLASE"/>
    <property type="match status" value="1"/>
</dbReference>
<dbReference type="Pfam" id="PF02580">
    <property type="entry name" value="Tyr_Deacylase"/>
    <property type="match status" value="1"/>
</dbReference>
<dbReference type="SUPFAM" id="SSF69500">
    <property type="entry name" value="DTD-like"/>
    <property type="match status" value="1"/>
</dbReference>
<sequence>MAAARPVLARALLQQCLFARLQVKPPEHGAEAEWEEIQRGLVIYICFFKGADEDLVPKIVNVLLNVKLSEDENGEYVSVLDLPGNVLIIPQATLGGKLKGRKMQYHTNIEKEKGMELYSQFVSLCEKELAANPKCMEAGVLVKHGTYGNRQVLKLDTNGPYTHLVEF</sequence>
<keyword id="KW-0963">Cytoplasm</keyword>
<keyword id="KW-0378">Hydrolase</keyword>
<keyword id="KW-1185">Reference proteome</keyword>
<keyword id="KW-0694">RNA-binding</keyword>
<keyword id="KW-0820">tRNA-binding</keyword>
<reference evidence="6" key="1">
    <citation type="journal article" date="2004" name="Nature">
        <title>Sequence and comparative analysis of the chicken genome provide unique perspectives on vertebrate evolution.</title>
        <authorList>
            <person name="Hillier L.W."/>
            <person name="Miller W."/>
            <person name="Birney E."/>
            <person name="Warren W."/>
            <person name="Hardison R.C."/>
            <person name="Ponting C.P."/>
            <person name="Bork P."/>
            <person name="Burt D.W."/>
            <person name="Groenen M.A.M."/>
            <person name="Delany M.E."/>
            <person name="Dodgson J.B."/>
            <person name="Chinwalla A.T."/>
            <person name="Cliften P.F."/>
            <person name="Clifton S.W."/>
            <person name="Delehaunty K.D."/>
            <person name="Fronick C."/>
            <person name="Fulton R.S."/>
            <person name="Graves T.A."/>
            <person name="Kremitzki C."/>
            <person name="Layman D."/>
            <person name="Magrini V."/>
            <person name="McPherson J.D."/>
            <person name="Miner T.L."/>
            <person name="Minx P."/>
            <person name="Nash W.E."/>
            <person name="Nhan M.N."/>
            <person name="Nelson J.O."/>
            <person name="Oddy L.G."/>
            <person name="Pohl C.S."/>
            <person name="Randall-Maher J."/>
            <person name="Smith S.M."/>
            <person name="Wallis J.W."/>
            <person name="Yang S.-P."/>
            <person name="Romanov M.N."/>
            <person name="Rondelli C.M."/>
            <person name="Paton B."/>
            <person name="Smith J."/>
            <person name="Morrice D."/>
            <person name="Daniels L."/>
            <person name="Tempest H.G."/>
            <person name="Robertson L."/>
            <person name="Masabanda J.S."/>
            <person name="Griffin D.K."/>
            <person name="Vignal A."/>
            <person name="Fillon V."/>
            <person name="Jacobbson L."/>
            <person name="Kerje S."/>
            <person name="Andersson L."/>
            <person name="Crooijmans R.P."/>
            <person name="Aerts J."/>
            <person name="van der Poel J.J."/>
            <person name="Ellegren H."/>
            <person name="Caldwell R.B."/>
            <person name="Hubbard S.J."/>
            <person name="Grafham D.V."/>
            <person name="Kierzek A.M."/>
            <person name="McLaren S.R."/>
            <person name="Overton I.M."/>
            <person name="Arakawa H."/>
            <person name="Beattie K.J."/>
            <person name="Bezzubov Y."/>
            <person name="Boardman P.E."/>
            <person name="Bonfield J.K."/>
            <person name="Croning M.D.R."/>
            <person name="Davies R.M."/>
            <person name="Francis M.D."/>
            <person name="Humphray S.J."/>
            <person name="Scott C.E."/>
            <person name="Taylor R.G."/>
            <person name="Tickle C."/>
            <person name="Brown W.R.A."/>
            <person name="Rogers J."/>
            <person name="Buerstedde J.-M."/>
            <person name="Wilson S.A."/>
            <person name="Stubbs L."/>
            <person name="Ovcharenko I."/>
            <person name="Gordon L."/>
            <person name="Lucas S."/>
            <person name="Miller M.M."/>
            <person name="Inoko H."/>
            <person name="Shiina T."/>
            <person name="Kaufman J."/>
            <person name="Salomonsen J."/>
            <person name="Skjoedt K."/>
            <person name="Wong G.K.-S."/>
            <person name="Wang J."/>
            <person name="Liu B."/>
            <person name="Wang J."/>
            <person name="Yu J."/>
            <person name="Yang H."/>
            <person name="Nefedov M."/>
            <person name="Koriabine M."/>
            <person name="Dejong P.J."/>
            <person name="Goodstadt L."/>
            <person name="Webber C."/>
            <person name="Dickens N.J."/>
            <person name="Letunic I."/>
            <person name="Suyama M."/>
            <person name="Torrents D."/>
            <person name="von Mering C."/>
            <person name="Zdobnov E.M."/>
            <person name="Makova K."/>
            <person name="Nekrutenko A."/>
            <person name="Elnitski L."/>
            <person name="Eswara P."/>
            <person name="King D.C."/>
            <person name="Yang S.-P."/>
            <person name="Tyekucheva S."/>
            <person name="Radakrishnan A."/>
            <person name="Harris R.S."/>
            <person name="Chiaromonte F."/>
            <person name="Taylor J."/>
            <person name="He J."/>
            <person name="Rijnkels M."/>
            <person name="Griffiths-Jones S."/>
            <person name="Ureta-Vidal A."/>
            <person name="Hoffman M.M."/>
            <person name="Severin J."/>
            <person name="Searle S.M.J."/>
            <person name="Law A.S."/>
            <person name="Speed D."/>
            <person name="Waddington D."/>
            <person name="Cheng Z."/>
            <person name="Tuzun E."/>
            <person name="Eichler E."/>
            <person name="Bao Z."/>
            <person name="Flicek P."/>
            <person name="Shteynberg D.D."/>
            <person name="Brent M.R."/>
            <person name="Bye J.M."/>
            <person name="Huckle E.J."/>
            <person name="Chatterji S."/>
            <person name="Dewey C."/>
            <person name="Pachter L."/>
            <person name="Kouranov A."/>
            <person name="Mourelatos Z."/>
            <person name="Hatzigeorgiou A.G."/>
            <person name="Paterson A.H."/>
            <person name="Ivarie R."/>
            <person name="Brandstrom M."/>
            <person name="Axelsson E."/>
            <person name="Backstrom N."/>
            <person name="Berlin S."/>
            <person name="Webster M.T."/>
            <person name="Pourquie O."/>
            <person name="Reymond A."/>
            <person name="Ucla C."/>
            <person name="Antonarakis S.E."/>
            <person name="Long M."/>
            <person name="Emerson J.J."/>
            <person name="Betran E."/>
            <person name="Dupanloup I."/>
            <person name="Kaessmann H."/>
            <person name="Hinrichs A.S."/>
            <person name="Bejerano G."/>
            <person name="Furey T.S."/>
            <person name="Harte R.A."/>
            <person name="Raney B."/>
            <person name="Siepel A."/>
            <person name="Kent W.J."/>
            <person name="Haussler D."/>
            <person name="Eyras E."/>
            <person name="Castelo R."/>
            <person name="Abril J.F."/>
            <person name="Castellano S."/>
            <person name="Camara F."/>
            <person name="Parra G."/>
            <person name="Guigo R."/>
            <person name="Bourque G."/>
            <person name="Tesler G."/>
            <person name="Pevzner P.A."/>
            <person name="Smit A."/>
            <person name="Fulton L.A."/>
            <person name="Mardis E.R."/>
            <person name="Wilson R.K."/>
        </authorList>
    </citation>
    <scope>NUCLEOTIDE SEQUENCE [LARGE SCALE GENOMIC DNA]</scope>
    <source>
        <strain evidence="6">Red jungle fowl</strain>
    </source>
</reference>
<reference evidence="4" key="2">
    <citation type="journal article" date="2018" name="Nat. Commun.">
        <title>A chiral selectivity relaxed paralog of DTD for proofreading tRNA mischarging in Animalia.</title>
        <authorList>
            <person name="Kuncha S.K."/>
            <person name="Mazeed M."/>
            <person name="Singh R."/>
            <person name="Kattula B."/>
            <person name="Routh S.B."/>
            <person name="Sankaranarayanan R."/>
        </authorList>
    </citation>
    <scope>FUNCTION</scope>
    <scope>CATALYTIC ACTIVITY</scope>
</reference>
<name>DTD2_CHICK</name>